<proteinExistence type="inferred from homology"/>
<keyword id="KW-0004">4Fe-4S</keyword>
<keyword id="KW-0997">Cell inner membrane</keyword>
<keyword id="KW-1003">Cell membrane</keyword>
<keyword id="KW-0408">Iron</keyword>
<keyword id="KW-0411">Iron-sulfur</keyword>
<keyword id="KW-0472">Membrane</keyword>
<keyword id="KW-0479">Metal-binding</keyword>
<keyword id="KW-0520">NAD</keyword>
<keyword id="KW-0874">Quinone</keyword>
<keyword id="KW-1278">Translocase</keyword>
<keyword id="KW-0813">Transport</keyword>
<keyword id="KW-0830">Ubiquinone</keyword>
<gene>
    <name evidence="1" type="primary">nuoB</name>
    <name type="ordered locus">XAC2703</name>
</gene>
<name>NUOB_XANAC</name>
<organism>
    <name type="scientific">Xanthomonas axonopodis pv. citri (strain 306)</name>
    <dbReference type="NCBI Taxonomy" id="190486"/>
    <lineage>
        <taxon>Bacteria</taxon>
        <taxon>Pseudomonadati</taxon>
        <taxon>Pseudomonadota</taxon>
        <taxon>Gammaproteobacteria</taxon>
        <taxon>Lysobacterales</taxon>
        <taxon>Lysobacteraceae</taxon>
        <taxon>Xanthomonas</taxon>
    </lineage>
</organism>
<accession>Q8PJ41</accession>
<reference key="1">
    <citation type="journal article" date="2002" name="Nature">
        <title>Comparison of the genomes of two Xanthomonas pathogens with differing host specificities.</title>
        <authorList>
            <person name="da Silva A.C.R."/>
            <person name="Ferro J.A."/>
            <person name="Reinach F.C."/>
            <person name="Farah C.S."/>
            <person name="Furlan L.R."/>
            <person name="Quaggio R.B."/>
            <person name="Monteiro-Vitorello C.B."/>
            <person name="Van Sluys M.A."/>
            <person name="Almeida N.F. Jr."/>
            <person name="Alves L.M.C."/>
            <person name="do Amaral A.M."/>
            <person name="Bertolini M.C."/>
            <person name="Camargo L.E.A."/>
            <person name="Camarotte G."/>
            <person name="Cannavan F."/>
            <person name="Cardozo J."/>
            <person name="Chambergo F."/>
            <person name="Ciapina L.P."/>
            <person name="Cicarelli R.M.B."/>
            <person name="Coutinho L.L."/>
            <person name="Cursino-Santos J.R."/>
            <person name="El-Dorry H."/>
            <person name="Faria J.B."/>
            <person name="Ferreira A.J.S."/>
            <person name="Ferreira R.C.C."/>
            <person name="Ferro M.I.T."/>
            <person name="Formighieri E.F."/>
            <person name="Franco M.C."/>
            <person name="Greggio C.C."/>
            <person name="Gruber A."/>
            <person name="Katsuyama A.M."/>
            <person name="Kishi L.T."/>
            <person name="Leite R.P."/>
            <person name="Lemos E.G.M."/>
            <person name="Lemos M.V.F."/>
            <person name="Locali E.C."/>
            <person name="Machado M.A."/>
            <person name="Madeira A.M.B.N."/>
            <person name="Martinez-Rossi N.M."/>
            <person name="Martins E.C."/>
            <person name="Meidanis J."/>
            <person name="Menck C.F.M."/>
            <person name="Miyaki C.Y."/>
            <person name="Moon D.H."/>
            <person name="Moreira L.M."/>
            <person name="Novo M.T.M."/>
            <person name="Okura V.K."/>
            <person name="Oliveira M.C."/>
            <person name="Oliveira V.R."/>
            <person name="Pereira H.A."/>
            <person name="Rossi A."/>
            <person name="Sena J.A.D."/>
            <person name="Silva C."/>
            <person name="de Souza R.F."/>
            <person name="Spinola L.A.F."/>
            <person name="Takita M.A."/>
            <person name="Tamura R.E."/>
            <person name="Teixeira E.C."/>
            <person name="Tezza R.I.D."/>
            <person name="Trindade dos Santos M."/>
            <person name="Truffi D."/>
            <person name="Tsai S.M."/>
            <person name="White F.F."/>
            <person name="Setubal J.C."/>
            <person name="Kitajima J.P."/>
        </authorList>
    </citation>
    <scope>NUCLEOTIDE SEQUENCE [LARGE SCALE GENOMIC DNA]</scope>
    <source>
        <strain>306</strain>
    </source>
</reference>
<evidence type="ECO:0000255" key="1">
    <source>
        <dbReference type="HAMAP-Rule" id="MF_01356"/>
    </source>
</evidence>
<evidence type="ECO:0000305" key="2"/>
<sequence length="184" mass="20375">MGVIQTLDSLMTNPMPEGRVEDILRPEGENPLLEKGYVTTSVDALLNWARTGSMWPMTFGLACCAVEMMHAGASRLDLDRYGVVFRPSPRQSDVMIVAGTLVNKMAPALRKVYDQMPDPKWVISMGSCANGGGYYHYSYSVVRGCDRIVPVDIYVPGCPPTAEALVYGILQLQKKIWRTQTIAR</sequence>
<feature type="chain" id="PRO_0000376402" description="NADH-quinone oxidoreductase subunit B">
    <location>
        <begin position="1"/>
        <end position="184"/>
    </location>
</feature>
<feature type="binding site" evidence="1">
    <location>
        <position position="63"/>
    </location>
    <ligand>
        <name>[4Fe-4S] cluster</name>
        <dbReference type="ChEBI" id="CHEBI:49883"/>
    </ligand>
</feature>
<feature type="binding site" evidence="1">
    <location>
        <position position="64"/>
    </location>
    <ligand>
        <name>[4Fe-4S] cluster</name>
        <dbReference type="ChEBI" id="CHEBI:49883"/>
    </ligand>
</feature>
<feature type="binding site" evidence="1">
    <location>
        <position position="128"/>
    </location>
    <ligand>
        <name>[4Fe-4S] cluster</name>
        <dbReference type="ChEBI" id="CHEBI:49883"/>
    </ligand>
</feature>
<feature type="binding site" evidence="1">
    <location>
        <position position="158"/>
    </location>
    <ligand>
        <name>[4Fe-4S] cluster</name>
        <dbReference type="ChEBI" id="CHEBI:49883"/>
    </ligand>
</feature>
<dbReference type="EC" id="7.1.1.-" evidence="1"/>
<dbReference type="EMBL" id="AE008923">
    <property type="protein sequence ID" value="AAM37549.1"/>
    <property type="status" value="ALT_INIT"/>
    <property type="molecule type" value="Genomic_DNA"/>
</dbReference>
<dbReference type="RefSeq" id="WP_005914280.1">
    <property type="nucleotide sequence ID" value="NC_003919.1"/>
</dbReference>
<dbReference type="SMR" id="Q8PJ41"/>
<dbReference type="KEGG" id="xac:XAC2703"/>
<dbReference type="eggNOG" id="COG0377">
    <property type="taxonomic scope" value="Bacteria"/>
</dbReference>
<dbReference type="HOGENOM" id="CLU_055737_7_3_6"/>
<dbReference type="Proteomes" id="UP000000576">
    <property type="component" value="Chromosome"/>
</dbReference>
<dbReference type="GO" id="GO:0005886">
    <property type="term" value="C:plasma membrane"/>
    <property type="evidence" value="ECO:0007669"/>
    <property type="project" value="UniProtKB-SubCell"/>
</dbReference>
<dbReference type="GO" id="GO:0045271">
    <property type="term" value="C:respiratory chain complex I"/>
    <property type="evidence" value="ECO:0007669"/>
    <property type="project" value="TreeGrafter"/>
</dbReference>
<dbReference type="GO" id="GO:0051539">
    <property type="term" value="F:4 iron, 4 sulfur cluster binding"/>
    <property type="evidence" value="ECO:0007669"/>
    <property type="project" value="UniProtKB-KW"/>
</dbReference>
<dbReference type="GO" id="GO:0005506">
    <property type="term" value="F:iron ion binding"/>
    <property type="evidence" value="ECO:0007669"/>
    <property type="project" value="UniProtKB-UniRule"/>
</dbReference>
<dbReference type="GO" id="GO:0008137">
    <property type="term" value="F:NADH dehydrogenase (ubiquinone) activity"/>
    <property type="evidence" value="ECO:0007669"/>
    <property type="project" value="InterPro"/>
</dbReference>
<dbReference type="GO" id="GO:0050136">
    <property type="term" value="F:NADH:ubiquinone reductase (non-electrogenic) activity"/>
    <property type="evidence" value="ECO:0007669"/>
    <property type="project" value="UniProtKB-UniRule"/>
</dbReference>
<dbReference type="GO" id="GO:0048038">
    <property type="term" value="F:quinone binding"/>
    <property type="evidence" value="ECO:0007669"/>
    <property type="project" value="UniProtKB-KW"/>
</dbReference>
<dbReference type="GO" id="GO:0009060">
    <property type="term" value="P:aerobic respiration"/>
    <property type="evidence" value="ECO:0007669"/>
    <property type="project" value="TreeGrafter"/>
</dbReference>
<dbReference type="GO" id="GO:0015990">
    <property type="term" value="P:electron transport coupled proton transport"/>
    <property type="evidence" value="ECO:0007669"/>
    <property type="project" value="TreeGrafter"/>
</dbReference>
<dbReference type="FunFam" id="3.40.50.12280:FF:000001">
    <property type="entry name" value="NADH-quinone oxidoreductase subunit B 2"/>
    <property type="match status" value="1"/>
</dbReference>
<dbReference type="Gene3D" id="3.40.50.12280">
    <property type="match status" value="1"/>
</dbReference>
<dbReference type="HAMAP" id="MF_01356">
    <property type="entry name" value="NDH1_NuoB"/>
    <property type="match status" value="1"/>
</dbReference>
<dbReference type="InterPro" id="IPR006137">
    <property type="entry name" value="NADH_UbQ_OxRdtase-like_20kDa"/>
</dbReference>
<dbReference type="InterPro" id="IPR006138">
    <property type="entry name" value="NADH_UQ_OxRdtase_20Kd_su"/>
</dbReference>
<dbReference type="NCBIfam" id="TIGR01957">
    <property type="entry name" value="nuoB_fam"/>
    <property type="match status" value="1"/>
</dbReference>
<dbReference type="NCBIfam" id="NF005012">
    <property type="entry name" value="PRK06411.1"/>
    <property type="match status" value="1"/>
</dbReference>
<dbReference type="PANTHER" id="PTHR11995">
    <property type="entry name" value="NADH DEHYDROGENASE"/>
    <property type="match status" value="1"/>
</dbReference>
<dbReference type="PANTHER" id="PTHR11995:SF14">
    <property type="entry name" value="NADH DEHYDROGENASE [UBIQUINONE] IRON-SULFUR PROTEIN 7, MITOCHONDRIAL"/>
    <property type="match status" value="1"/>
</dbReference>
<dbReference type="Pfam" id="PF01058">
    <property type="entry name" value="Oxidored_q6"/>
    <property type="match status" value="1"/>
</dbReference>
<dbReference type="SUPFAM" id="SSF56770">
    <property type="entry name" value="HydA/Nqo6-like"/>
    <property type="match status" value="1"/>
</dbReference>
<dbReference type="PROSITE" id="PS01150">
    <property type="entry name" value="COMPLEX1_20K"/>
    <property type="match status" value="1"/>
</dbReference>
<comment type="function">
    <text evidence="1">NDH-1 shuttles electrons from NADH, via FMN and iron-sulfur (Fe-S) centers, to quinones in the respiratory chain. The immediate electron acceptor for the enzyme in this species is believed to be ubiquinone. Couples the redox reaction to proton translocation (for every two electrons transferred, four hydrogen ions are translocated across the cytoplasmic membrane), and thus conserves the redox energy in a proton gradient.</text>
</comment>
<comment type="catalytic activity">
    <reaction evidence="1">
        <text>a quinone + NADH + 5 H(+)(in) = a quinol + NAD(+) + 4 H(+)(out)</text>
        <dbReference type="Rhea" id="RHEA:57888"/>
        <dbReference type="ChEBI" id="CHEBI:15378"/>
        <dbReference type="ChEBI" id="CHEBI:24646"/>
        <dbReference type="ChEBI" id="CHEBI:57540"/>
        <dbReference type="ChEBI" id="CHEBI:57945"/>
        <dbReference type="ChEBI" id="CHEBI:132124"/>
    </reaction>
</comment>
<comment type="cofactor">
    <cofactor evidence="1">
        <name>[4Fe-4S] cluster</name>
        <dbReference type="ChEBI" id="CHEBI:49883"/>
    </cofactor>
    <text evidence="1">Binds 1 [4Fe-4S] cluster.</text>
</comment>
<comment type="subunit">
    <text evidence="1">NDH-1 is composed of 14 different subunits. Subunits NuoB, C, D, E, F, and G constitute the peripheral sector of the complex.</text>
</comment>
<comment type="subcellular location">
    <subcellularLocation>
        <location evidence="1">Cell inner membrane</location>
        <topology evidence="1">Peripheral membrane protein</topology>
        <orientation evidence="1">Cytoplasmic side</orientation>
    </subcellularLocation>
</comment>
<comment type="similarity">
    <text evidence="1">Belongs to the complex I 20 kDa subunit family.</text>
</comment>
<comment type="sequence caution" evidence="2">
    <conflict type="erroneous initiation">
        <sequence resource="EMBL-CDS" id="AAM37549"/>
    </conflict>
</comment>
<protein>
    <recommendedName>
        <fullName evidence="1">NADH-quinone oxidoreductase subunit B</fullName>
        <ecNumber evidence="1">7.1.1.-</ecNumber>
    </recommendedName>
    <alternativeName>
        <fullName evidence="1">NADH dehydrogenase I subunit B</fullName>
    </alternativeName>
    <alternativeName>
        <fullName evidence="1">NDH-1 subunit B</fullName>
    </alternativeName>
</protein>